<feature type="chain" id="PRO_1000061947" description="UPF0761 membrane protein YpsIP31758_0030">
    <location>
        <begin position="1"/>
        <end position="294"/>
    </location>
</feature>
<feature type="transmembrane region" description="Helical" evidence="1">
    <location>
        <begin position="44"/>
        <end position="64"/>
    </location>
</feature>
<feature type="transmembrane region" description="Helical" evidence="1">
    <location>
        <begin position="67"/>
        <end position="87"/>
    </location>
</feature>
<feature type="transmembrane region" description="Helical" evidence="1">
    <location>
        <begin position="108"/>
        <end position="128"/>
    </location>
</feature>
<feature type="transmembrane region" description="Helical" evidence="1">
    <location>
        <begin position="136"/>
        <end position="156"/>
    </location>
</feature>
<feature type="transmembrane region" description="Helical" evidence="1">
    <location>
        <begin position="185"/>
        <end position="205"/>
    </location>
</feature>
<feature type="transmembrane region" description="Helical" evidence="1">
    <location>
        <begin position="212"/>
        <end position="232"/>
    </location>
</feature>
<feature type="transmembrane region" description="Helical" evidence="1">
    <location>
        <begin position="246"/>
        <end position="266"/>
    </location>
</feature>
<reference key="1">
    <citation type="journal article" date="2007" name="PLoS Genet.">
        <title>The complete genome sequence of Yersinia pseudotuberculosis IP31758, the causative agent of Far East scarlet-like fever.</title>
        <authorList>
            <person name="Eppinger M."/>
            <person name="Rosovitz M.J."/>
            <person name="Fricke W.F."/>
            <person name="Rasko D.A."/>
            <person name="Kokorina G."/>
            <person name="Fayolle C."/>
            <person name="Lindler L.E."/>
            <person name="Carniel E."/>
            <person name="Ravel J."/>
        </authorList>
    </citation>
    <scope>NUCLEOTIDE SEQUENCE [LARGE SCALE GENOMIC DNA]</scope>
    <source>
        <strain>IP 31758</strain>
    </source>
</reference>
<protein>
    <recommendedName>
        <fullName evidence="1">UPF0761 membrane protein YpsIP31758_0030</fullName>
    </recommendedName>
</protein>
<dbReference type="EMBL" id="CP000720">
    <property type="protein sequence ID" value="ABS49547.1"/>
    <property type="molecule type" value="Genomic_DNA"/>
</dbReference>
<dbReference type="RefSeq" id="WP_011191445.1">
    <property type="nucleotide sequence ID" value="NC_009708.1"/>
</dbReference>
<dbReference type="KEGG" id="ypi:YpsIP31758_0030"/>
<dbReference type="HOGENOM" id="CLU_032288_0_0_6"/>
<dbReference type="Proteomes" id="UP000002412">
    <property type="component" value="Chromosome"/>
</dbReference>
<dbReference type="GO" id="GO:0005886">
    <property type="term" value="C:plasma membrane"/>
    <property type="evidence" value="ECO:0007669"/>
    <property type="project" value="UniProtKB-SubCell"/>
</dbReference>
<dbReference type="HAMAP" id="MF_00672">
    <property type="entry name" value="UPF0761"/>
    <property type="match status" value="1"/>
</dbReference>
<dbReference type="InterPro" id="IPR023679">
    <property type="entry name" value="UPF0761_bac"/>
</dbReference>
<dbReference type="InterPro" id="IPR017039">
    <property type="entry name" value="Virul_fac_BrkB"/>
</dbReference>
<dbReference type="NCBIfam" id="NF002457">
    <property type="entry name" value="PRK01637.1"/>
    <property type="match status" value="1"/>
</dbReference>
<dbReference type="NCBIfam" id="TIGR00765">
    <property type="entry name" value="yihY_not_rbn"/>
    <property type="match status" value="1"/>
</dbReference>
<dbReference type="PANTHER" id="PTHR30213">
    <property type="entry name" value="INNER MEMBRANE PROTEIN YHJD"/>
    <property type="match status" value="1"/>
</dbReference>
<dbReference type="PANTHER" id="PTHR30213:SF0">
    <property type="entry name" value="UPF0761 MEMBRANE PROTEIN YIHY"/>
    <property type="match status" value="1"/>
</dbReference>
<dbReference type="Pfam" id="PF03631">
    <property type="entry name" value="Virul_fac_BrkB"/>
    <property type="match status" value="1"/>
</dbReference>
<dbReference type="PIRSF" id="PIRSF035875">
    <property type="entry name" value="RNase_BN"/>
    <property type="match status" value="1"/>
</dbReference>
<sequence>MASFRRFRLLSPLKPCVTFGRMLYTRIDKDGLTMLAGHLAYVSLLSLVPLITVIFALFAAFPMFAEISIKLKAFIFANFMPATGDIIQNYLEQFVANSNRMTVVGTCGLIVTALLLIYSVDSVLNIIWRSKIQRSLVFSFAVYWMVLTLGPILVGASMVISSYLLSLHWLAHARVDSMIDEILRVFPLLISWVSFWLLYSVVPTVRVPARDALIGALVAALLFELGKKGFAMYITLFPSYQLIYGVLAVIPILFLWVYWSWCIVLLGAEITVTLGEYRAERHHAKSVITQSPEM</sequence>
<proteinExistence type="inferred from homology"/>
<comment type="subcellular location">
    <subcellularLocation>
        <location evidence="1">Cell inner membrane</location>
        <topology evidence="1">Multi-pass membrane protein</topology>
    </subcellularLocation>
</comment>
<comment type="similarity">
    <text evidence="1">Belongs to the UPF0761 family.</text>
</comment>
<keyword id="KW-0997">Cell inner membrane</keyword>
<keyword id="KW-1003">Cell membrane</keyword>
<keyword id="KW-0472">Membrane</keyword>
<keyword id="KW-0812">Transmembrane</keyword>
<keyword id="KW-1133">Transmembrane helix</keyword>
<accession>A7FCQ3</accession>
<evidence type="ECO:0000255" key="1">
    <source>
        <dbReference type="HAMAP-Rule" id="MF_00672"/>
    </source>
</evidence>
<gene>
    <name type="ordered locus">YpsIP31758_0030</name>
</gene>
<organism>
    <name type="scientific">Yersinia pseudotuberculosis serotype O:1b (strain IP 31758)</name>
    <dbReference type="NCBI Taxonomy" id="349747"/>
    <lineage>
        <taxon>Bacteria</taxon>
        <taxon>Pseudomonadati</taxon>
        <taxon>Pseudomonadota</taxon>
        <taxon>Gammaproteobacteria</taxon>
        <taxon>Enterobacterales</taxon>
        <taxon>Yersiniaceae</taxon>
        <taxon>Yersinia</taxon>
    </lineage>
</organism>
<name>Y030_YERP3</name>